<reference key="1">
    <citation type="journal article" date="2006" name="PLoS Biol.">
        <title>Metabolic complementarity and genomics of the dual bacterial symbiosis of sharpshooters.</title>
        <authorList>
            <person name="Wu D."/>
            <person name="Daugherty S.C."/>
            <person name="Van Aken S.E."/>
            <person name="Pai G.H."/>
            <person name="Watkins K.L."/>
            <person name="Khouri H."/>
            <person name="Tallon L.J."/>
            <person name="Zaborsky J.M."/>
            <person name="Dunbar H.E."/>
            <person name="Tran P.L."/>
            <person name="Moran N.A."/>
            <person name="Eisen J.A."/>
        </authorList>
    </citation>
    <scope>NUCLEOTIDE SEQUENCE [LARGE SCALE GENOMIC DNA]</scope>
</reference>
<keyword id="KW-0012">Acyltransferase</keyword>
<keyword id="KW-0963">Cytoplasm</keyword>
<keyword id="KW-1185">Reference proteome</keyword>
<keyword id="KW-0808">Transferase</keyword>
<gene>
    <name evidence="1" type="primary">lipB</name>
    <name type="ordered locus">BCI_0237</name>
</gene>
<proteinExistence type="inferred from homology"/>
<name>LIPB_BAUCH</name>
<accession>Q1LTM4</accession>
<comment type="function">
    <text evidence="1">Catalyzes the transfer of endogenously produced octanoic acid from octanoyl-acyl-carrier-protein onto the lipoyl domains of lipoate-dependent enzymes. Lipoyl-ACP can also act as a substrate although octanoyl-ACP is likely to be the physiological substrate.</text>
</comment>
<comment type="catalytic activity">
    <reaction evidence="1">
        <text>octanoyl-[ACP] + L-lysyl-[protein] = N(6)-octanoyl-L-lysyl-[protein] + holo-[ACP] + H(+)</text>
        <dbReference type="Rhea" id="RHEA:17665"/>
        <dbReference type="Rhea" id="RHEA-COMP:9636"/>
        <dbReference type="Rhea" id="RHEA-COMP:9685"/>
        <dbReference type="Rhea" id="RHEA-COMP:9752"/>
        <dbReference type="Rhea" id="RHEA-COMP:9928"/>
        <dbReference type="ChEBI" id="CHEBI:15378"/>
        <dbReference type="ChEBI" id="CHEBI:29969"/>
        <dbReference type="ChEBI" id="CHEBI:64479"/>
        <dbReference type="ChEBI" id="CHEBI:78463"/>
        <dbReference type="ChEBI" id="CHEBI:78809"/>
        <dbReference type="EC" id="2.3.1.181"/>
    </reaction>
</comment>
<comment type="pathway">
    <text evidence="1">Protein modification; protein lipoylation via endogenous pathway; protein N(6)-(lipoyl)lysine from octanoyl-[acyl-carrier-protein]: step 1/2.</text>
</comment>
<comment type="subcellular location">
    <subcellularLocation>
        <location evidence="1">Cytoplasm</location>
    </subcellularLocation>
</comment>
<comment type="miscellaneous">
    <text evidence="1">In the reaction, the free carboxyl group of octanoic acid is attached via an amide linkage to the epsilon-amino group of a specific lysine residue of lipoyl domains of lipoate-dependent enzymes.</text>
</comment>
<comment type="similarity">
    <text evidence="1">Belongs to the LipB family.</text>
</comment>
<protein>
    <recommendedName>
        <fullName evidence="1">Octanoyltransferase</fullName>
        <ecNumber evidence="1">2.3.1.181</ecNumber>
    </recommendedName>
    <alternativeName>
        <fullName evidence="1">Lipoate-protein ligase B</fullName>
    </alternativeName>
    <alternativeName>
        <fullName evidence="1">Lipoyl/octanoyl transferase</fullName>
    </alternativeName>
    <alternativeName>
        <fullName evidence="1">Octanoyl-[acyl-carrier-protein]-protein N-octanoyltransferase</fullName>
    </alternativeName>
</protein>
<dbReference type="EC" id="2.3.1.181" evidence="1"/>
<dbReference type="EMBL" id="CP000238">
    <property type="protein sequence ID" value="ABF13905.1"/>
    <property type="molecule type" value="Genomic_DNA"/>
</dbReference>
<dbReference type="RefSeq" id="WP_011520423.1">
    <property type="nucleotide sequence ID" value="NC_007984.1"/>
</dbReference>
<dbReference type="SMR" id="Q1LTM4"/>
<dbReference type="STRING" id="374463.BCI_0237"/>
<dbReference type="KEGG" id="bci:BCI_0237"/>
<dbReference type="HOGENOM" id="CLU_035168_3_1_6"/>
<dbReference type="OrthoDB" id="9787061at2"/>
<dbReference type="UniPathway" id="UPA00538">
    <property type="reaction ID" value="UER00592"/>
</dbReference>
<dbReference type="Proteomes" id="UP000002427">
    <property type="component" value="Chromosome"/>
</dbReference>
<dbReference type="GO" id="GO:0005737">
    <property type="term" value="C:cytoplasm"/>
    <property type="evidence" value="ECO:0007669"/>
    <property type="project" value="UniProtKB-SubCell"/>
</dbReference>
<dbReference type="GO" id="GO:0033819">
    <property type="term" value="F:lipoyl(octanoyl) transferase activity"/>
    <property type="evidence" value="ECO:0007669"/>
    <property type="project" value="UniProtKB-EC"/>
</dbReference>
<dbReference type="GO" id="GO:0036211">
    <property type="term" value="P:protein modification process"/>
    <property type="evidence" value="ECO:0007669"/>
    <property type="project" value="InterPro"/>
</dbReference>
<dbReference type="CDD" id="cd16444">
    <property type="entry name" value="LipB"/>
    <property type="match status" value="1"/>
</dbReference>
<dbReference type="FunFam" id="3.30.930.10:FF:000020">
    <property type="entry name" value="Octanoyltransferase"/>
    <property type="match status" value="1"/>
</dbReference>
<dbReference type="Gene3D" id="3.30.930.10">
    <property type="entry name" value="Bira Bifunctional Protein, Domain 2"/>
    <property type="match status" value="1"/>
</dbReference>
<dbReference type="HAMAP" id="MF_00013">
    <property type="entry name" value="LipB"/>
    <property type="match status" value="1"/>
</dbReference>
<dbReference type="InterPro" id="IPR045864">
    <property type="entry name" value="aa-tRNA-synth_II/BPL/LPL"/>
</dbReference>
<dbReference type="InterPro" id="IPR004143">
    <property type="entry name" value="BPL_LPL_catalytic"/>
</dbReference>
<dbReference type="InterPro" id="IPR000544">
    <property type="entry name" value="Octanoyltransferase"/>
</dbReference>
<dbReference type="InterPro" id="IPR020605">
    <property type="entry name" value="Octanoyltransferase_CS"/>
</dbReference>
<dbReference type="NCBIfam" id="TIGR00214">
    <property type="entry name" value="lipB"/>
    <property type="match status" value="1"/>
</dbReference>
<dbReference type="NCBIfam" id="NF010922">
    <property type="entry name" value="PRK14342.1"/>
    <property type="match status" value="1"/>
</dbReference>
<dbReference type="PANTHER" id="PTHR10993:SF7">
    <property type="entry name" value="LIPOYLTRANSFERASE 2, MITOCHONDRIAL-RELATED"/>
    <property type="match status" value="1"/>
</dbReference>
<dbReference type="PANTHER" id="PTHR10993">
    <property type="entry name" value="OCTANOYLTRANSFERASE"/>
    <property type="match status" value="1"/>
</dbReference>
<dbReference type="Pfam" id="PF21948">
    <property type="entry name" value="LplA-B_cat"/>
    <property type="match status" value="1"/>
</dbReference>
<dbReference type="PIRSF" id="PIRSF016262">
    <property type="entry name" value="LPLase"/>
    <property type="match status" value="1"/>
</dbReference>
<dbReference type="SUPFAM" id="SSF55681">
    <property type="entry name" value="Class II aaRS and biotin synthetases"/>
    <property type="match status" value="1"/>
</dbReference>
<dbReference type="PROSITE" id="PS51733">
    <property type="entry name" value="BPL_LPL_CATALYTIC"/>
    <property type="match status" value="1"/>
</dbReference>
<dbReference type="PROSITE" id="PS01313">
    <property type="entry name" value="LIPB"/>
    <property type="match status" value="1"/>
</dbReference>
<evidence type="ECO:0000255" key="1">
    <source>
        <dbReference type="HAMAP-Rule" id="MF_00013"/>
    </source>
</evidence>
<evidence type="ECO:0000255" key="2">
    <source>
        <dbReference type="PROSITE-ProRule" id="PRU01067"/>
    </source>
</evidence>
<organism>
    <name type="scientific">Baumannia cicadellinicola subsp. Homalodisca coagulata</name>
    <dbReference type="NCBI Taxonomy" id="374463"/>
    <lineage>
        <taxon>Bacteria</taxon>
        <taxon>Pseudomonadati</taxon>
        <taxon>Pseudomonadota</taxon>
        <taxon>Gammaproteobacteria</taxon>
        <taxon>Candidatus Palibaumannia</taxon>
    </lineage>
</organism>
<sequence>MTNNVIIRQLGIQAYQLVLVAMQRFTERRKANTIDEIWLVQHPPVFTQGNASESEYLLLIPGDIPVVQSDRGGKITYHGPGQQVMYVMLDLRRRNLLVRDLITILEKTVITTLYKFAITTAYSKKDAPGVYVGDDKICSIGLRIRKGCSLHGLALNIAMDLSPFLLINPCGEVGLRMTQLSRLSPVVYNTTDVVKVLLEVFLSLLGGTNTGAIKTWHYNDYLNNSES</sequence>
<feature type="chain" id="PRO_1000001088" description="Octanoyltransferase">
    <location>
        <begin position="1"/>
        <end position="227"/>
    </location>
</feature>
<feature type="domain" description="BPL/LPL catalytic" evidence="2">
    <location>
        <begin position="31"/>
        <end position="209"/>
    </location>
</feature>
<feature type="active site" description="Acyl-thioester intermediate" evidence="1">
    <location>
        <position position="170"/>
    </location>
</feature>
<feature type="binding site" evidence="1">
    <location>
        <begin position="71"/>
        <end position="78"/>
    </location>
    <ligand>
        <name>substrate</name>
    </ligand>
</feature>
<feature type="binding site" evidence="1">
    <location>
        <begin position="139"/>
        <end position="141"/>
    </location>
    <ligand>
        <name>substrate</name>
    </ligand>
</feature>
<feature type="binding site" evidence="1">
    <location>
        <begin position="152"/>
        <end position="154"/>
    </location>
    <ligand>
        <name>substrate</name>
    </ligand>
</feature>
<feature type="site" description="Lowers pKa of active site Cys" evidence="1">
    <location>
        <position position="136"/>
    </location>
</feature>